<protein>
    <recommendedName>
        <fullName evidence="1">Elongation factor Ts</fullName>
        <shortName evidence="1">EF-Ts</shortName>
    </recommendedName>
</protein>
<dbReference type="EMBL" id="AE017194">
    <property type="protein sequence ID" value="AAS42772.1"/>
    <property type="molecule type" value="Genomic_DNA"/>
</dbReference>
<dbReference type="SMR" id="Q732P3"/>
<dbReference type="KEGG" id="bca:BCE_3867"/>
<dbReference type="HOGENOM" id="CLU_047155_0_2_9"/>
<dbReference type="Proteomes" id="UP000002527">
    <property type="component" value="Chromosome"/>
</dbReference>
<dbReference type="GO" id="GO:0005737">
    <property type="term" value="C:cytoplasm"/>
    <property type="evidence" value="ECO:0007669"/>
    <property type="project" value="UniProtKB-SubCell"/>
</dbReference>
<dbReference type="GO" id="GO:0003746">
    <property type="term" value="F:translation elongation factor activity"/>
    <property type="evidence" value="ECO:0007669"/>
    <property type="project" value="UniProtKB-UniRule"/>
</dbReference>
<dbReference type="CDD" id="cd14275">
    <property type="entry name" value="UBA_EF-Ts"/>
    <property type="match status" value="1"/>
</dbReference>
<dbReference type="FunFam" id="1.10.286.20:FF:000003">
    <property type="entry name" value="Elongation factor Ts"/>
    <property type="match status" value="1"/>
</dbReference>
<dbReference type="FunFam" id="1.10.8.10:FF:000001">
    <property type="entry name" value="Elongation factor Ts"/>
    <property type="match status" value="1"/>
</dbReference>
<dbReference type="FunFam" id="3.30.479.20:FF:000005">
    <property type="entry name" value="Elongation factor Ts"/>
    <property type="match status" value="1"/>
</dbReference>
<dbReference type="Gene3D" id="1.10.286.20">
    <property type="match status" value="1"/>
</dbReference>
<dbReference type="Gene3D" id="1.10.8.10">
    <property type="entry name" value="DNA helicase RuvA subunit, C-terminal domain"/>
    <property type="match status" value="1"/>
</dbReference>
<dbReference type="Gene3D" id="3.30.479.20">
    <property type="entry name" value="Elongation factor Ts, dimerisation domain"/>
    <property type="match status" value="2"/>
</dbReference>
<dbReference type="HAMAP" id="MF_00050">
    <property type="entry name" value="EF_Ts"/>
    <property type="match status" value="1"/>
</dbReference>
<dbReference type="InterPro" id="IPR036402">
    <property type="entry name" value="EF-Ts_dimer_sf"/>
</dbReference>
<dbReference type="InterPro" id="IPR001816">
    <property type="entry name" value="Transl_elong_EFTs/EF1B"/>
</dbReference>
<dbReference type="InterPro" id="IPR014039">
    <property type="entry name" value="Transl_elong_EFTs/EF1B_dimer"/>
</dbReference>
<dbReference type="InterPro" id="IPR018101">
    <property type="entry name" value="Transl_elong_Ts_CS"/>
</dbReference>
<dbReference type="InterPro" id="IPR009060">
    <property type="entry name" value="UBA-like_sf"/>
</dbReference>
<dbReference type="NCBIfam" id="TIGR00116">
    <property type="entry name" value="tsf"/>
    <property type="match status" value="1"/>
</dbReference>
<dbReference type="PANTHER" id="PTHR11741">
    <property type="entry name" value="ELONGATION FACTOR TS"/>
    <property type="match status" value="1"/>
</dbReference>
<dbReference type="PANTHER" id="PTHR11741:SF0">
    <property type="entry name" value="ELONGATION FACTOR TS, MITOCHONDRIAL"/>
    <property type="match status" value="1"/>
</dbReference>
<dbReference type="Pfam" id="PF00889">
    <property type="entry name" value="EF_TS"/>
    <property type="match status" value="1"/>
</dbReference>
<dbReference type="SUPFAM" id="SSF54713">
    <property type="entry name" value="Elongation factor Ts (EF-Ts), dimerisation domain"/>
    <property type="match status" value="2"/>
</dbReference>
<dbReference type="SUPFAM" id="SSF46934">
    <property type="entry name" value="UBA-like"/>
    <property type="match status" value="1"/>
</dbReference>
<dbReference type="PROSITE" id="PS01126">
    <property type="entry name" value="EF_TS_1"/>
    <property type="match status" value="1"/>
</dbReference>
<dbReference type="PROSITE" id="PS01127">
    <property type="entry name" value="EF_TS_2"/>
    <property type="match status" value="1"/>
</dbReference>
<comment type="function">
    <text evidence="1">Associates with the EF-Tu.GDP complex and induces the exchange of GDP to GTP. It remains bound to the aminoacyl-tRNA.EF-Tu.GTP complex up to the GTP hydrolysis stage on the ribosome.</text>
</comment>
<comment type="subcellular location">
    <subcellularLocation>
        <location evidence="1">Cytoplasm</location>
    </subcellularLocation>
</comment>
<comment type="similarity">
    <text evidence="1">Belongs to the EF-Ts family.</text>
</comment>
<name>EFTS_BACC1</name>
<organism>
    <name type="scientific">Bacillus cereus (strain ATCC 10987 / NRS 248)</name>
    <dbReference type="NCBI Taxonomy" id="222523"/>
    <lineage>
        <taxon>Bacteria</taxon>
        <taxon>Bacillati</taxon>
        <taxon>Bacillota</taxon>
        <taxon>Bacilli</taxon>
        <taxon>Bacillales</taxon>
        <taxon>Bacillaceae</taxon>
        <taxon>Bacillus</taxon>
        <taxon>Bacillus cereus group</taxon>
    </lineage>
</organism>
<sequence length="295" mass="32463">MAITAQMVKELREKTGAGMMDCKKALTETNGDMEKAIDFLREKGIAKAAKKADRIAAEGLTFIETNGNDGLILELNSETDFVAKNEGFQTLIKELAAHLLAKKPANVEEAMAQTMENGKKVEEHINEAIAKIGEKLTLRRFEIVSKTDADAFGAYLHMGGRIGVLTVLEGSTDEAAAKDVAMHIAAVNPKYIDRDAVTAEEVEHERQVLTQQALNEGKPEKIVAKMVEGRLGKFFEEICLLDQAFVKNPDMKVRQFVESKGATLKGFVRYAVGEGIEKREDNFAEEVMNQVKGSN</sequence>
<gene>
    <name evidence="1" type="primary">tsf</name>
    <name type="ordered locus">BCE_3867</name>
</gene>
<keyword id="KW-0963">Cytoplasm</keyword>
<keyword id="KW-0251">Elongation factor</keyword>
<keyword id="KW-0648">Protein biosynthesis</keyword>
<accession>Q732P3</accession>
<proteinExistence type="inferred from homology"/>
<reference key="1">
    <citation type="journal article" date="2004" name="Nucleic Acids Res.">
        <title>The genome sequence of Bacillus cereus ATCC 10987 reveals metabolic adaptations and a large plasmid related to Bacillus anthracis pXO1.</title>
        <authorList>
            <person name="Rasko D.A."/>
            <person name="Ravel J."/>
            <person name="Oekstad O.A."/>
            <person name="Helgason E."/>
            <person name="Cer R.Z."/>
            <person name="Jiang L."/>
            <person name="Shores K.A."/>
            <person name="Fouts D.E."/>
            <person name="Tourasse N.J."/>
            <person name="Angiuoli S.V."/>
            <person name="Kolonay J.F."/>
            <person name="Nelson W.C."/>
            <person name="Kolstoe A.-B."/>
            <person name="Fraser C.M."/>
            <person name="Read T.D."/>
        </authorList>
    </citation>
    <scope>NUCLEOTIDE SEQUENCE [LARGE SCALE GENOMIC DNA]</scope>
    <source>
        <strain>ATCC 10987 / NRS 248</strain>
    </source>
</reference>
<evidence type="ECO:0000255" key="1">
    <source>
        <dbReference type="HAMAP-Rule" id="MF_00050"/>
    </source>
</evidence>
<feature type="chain" id="PRO_0000161069" description="Elongation factor Ts">
    <location>
        <begin position="1"/>
        <end position="295"/>
    </location>
</feature>
<feature type="region of interest" description="Involved in Mg(2+) ion dislocation from EF-Tu" evidence="1">
    <location>
        <begin position="79"/>
        <end position="82"/>
    </location>
</feature>